<gene>
    <name evidence="1" type="primary">rsmC</name>
    <name type="ordered locus">STY4906</name>
    <name type="ordered locus">t4599</name>
</gene>
<dbReference type="EC" id="2.1.1.172" evidence="1"/>
<dbReference type="EMBL" id="AE014613">
    <property type="protein sequence ID" value="AAO72031.1"/>
    <property type="molecule type" value="Genomic_DNA"/>
</dbReference>
<dbReference type="EMBL" id="AL513382">
    <property type="protein sequence ID" value="CAD03391.1"/>
    <property type="molecule type" value="Genomic_DNA"/>
</dbReference>
<dbReference type="RefSeq" id="NP_458968.1">
    <property type="nucleotide sequence ID" value="NC_003198.1"/>
</dbReference>
<dbReference type="RefSeq" id="WP_001272292.1">
    <property type="nucleotide sequence ID" value="NZ_WSUR01000014.1"/>
</dbReference>
<dbReference type="SMR" id="Q8Z0V2"/>
<dbReference type="STRING" id="220341.gene:17588725"/>
<dbReference type="KEGG" id="stt:t4599"/>
<dbReference type="KEGG" id="sty:STY4906"/>
<dbReference type="PATRIC" id="fig|220341.7.peg.5027"/>
<dbReference type="eggNOG" id="COG2813">
    <property type="taxonomic scope" value="Bacteria"/>
</dbReference>
<dbReference type="HOGENOM" id="CLU_049581_0_1_6"/>
<dbReference type="OMA" id="RHCQLWQ"/>
<dbReference type="OrthoDB" id="9816072at2"/>
<dbReference type="Proteomes" id="UP000000541">
    <property type="component" value="Chromosome"/>
</dbReference>
<dbReference type="Proteomes" id="UP000002670">
    <property type="component" value="Chromosome"/>
</dbReference>
<dbReference type="GO" id="GO:0005737">
    <property type="term" value="C:cytoplasm"/>
    <property type="evidence" value="ECO:0007669"/>
    <property type="project" value="UniProtKB-SubCell"/>
</dbReference>
<dbReference type="GO" id="GO:0052914">
    <property type="term" value="F:16S rRNA (guanine(1207)-N(2))-methyltransferase activity"/>
    <property type="evidence" value="ECO:0007669"/>
    <property type="project" value="UniProtKB-EC"/>
</dbReference>
<dbReference type="GO" id="GO:0003676">
    <property type="term" value="F:nucleic acid binding"/>
    <property type="evidence" value="ECO:0007669"/>
    <property type="project" value="InterPro"/>
</dbReference>
<dbReference type="CDD" id="cd02440">
    <property type="entry name" value="AdoMet_MTases"/>
    <property type="match status" value="1"/>
</dbReference>
<dbReference type="FunFam" id="3.40.50.150:FF:000058">
    <property type="entry name" value="Ribosomal RNA small subunit methyltransferase C"/>
    <property type="match status" value="1"/>
</dbReference>
<dbReference type="Gene3D" id="3.40.50.150">
    <property type="entry name" value="Vaccinia Virus protein VP39"/>
    <property type="match status" value="2"/>
</dbReference>
<dbReference type="HAMAP" id="MF_01862">
    <property type="entry name" value="16SrRNA_methyltr_C"/>
    <property type="match status" value="1"/>
</dbReference>
<dbReference type="InterPro" id="IPR002052">
    <property type="entry name" value="DNA_methylase_N6_adenine_CS"/>
</dbReference>
<dbReference type="InterPro" id="IPR013675">
    <property type="entry name" value="Mtase_sm_N"/>
</dbReference>
<dbReference type="InterPro" id="IPR023543">
    <property type="entry name" value="rRNA_ssu_MeTfrase_C"/>
</dbReference>
<dbReference type="InterPro" id="IPR046977">
    <property type="entry name" value="RsmC/RlmG"/>
</dbReference>
<dbReference type="InterPro" id="IPR029063">
    <property type="entry name" value="SAM-dependent_MTases_sf"/>
</dbReference>
<dbReference type="InterPro" id="IPR007848">
    <property type="entry name" value="Small_mtfrase_dom"/>
</dbReference>
<dbReference type="NCBIfam" id="NF007023">
    <property type="entry name" value="PRK09489.1"/>
    <property type="match status" value="1"/>
</dbReference>
<dbReference type="PANTHER" id="PTHR47816">
    <property type="entry name" value="RIBOSOMAL RNA SMALL SUBUNIT METHYLTRANSFERASE C"/>
    <property type="match status" value="1"/>
</dbReference>
<dbReference type="PANTHER" id="PTHR47816:SF4">
    <property type="entry name" value="RIBOSOMAL RNA SMALL SUBUNIT METHYLTRANSFERASE C"/>
    <property type="match status" value="1"/>
</dbReference>
<dbReference type="Pfam" id="PF05175">
    <property type="entry name" value="MTS"/>
    <property type="match status" value="1"/>
</dbReference>
<dbReference type="Pfam" id="PF08468">
    <property type="entry name" value="MTS_N"/>
    <property type="match status" value="1"/>
</dbReference>
<dbReference type="SUPFAM" id="SSF53335">
    <property type="entry name" value="S-adenosyl-L-methionine-dependent methyltransferases"/>
    <property type="match status" value="1"/>
</dbReference>
<name>RSMC_SALTI</name>
<protein>
    <recommendedName>
        <fullName evidence="1">Ribosomal RNA small subunit methyltransferase C</fullName>
        <ecNumber evidence="1">2.1.1.172</ecNumber>
    </recommendedName>
    <alternativeName>
        <fullName evidence="1">16S rRNA m2G1207 methyltransferase</fullName>
    </alternativeName>
    <alternativeName>
        <fullName evidence="1">rRNA (guanine-N(2)-)-methyltransferase RsmC</fullName>
    </alternativeName>
</protein>
<sequence length="342" mass="37626">MSAFTPASEVLLRHSDDFEQSRILFAGDLQDDLPARFECAASRAYTQQFHHWQALSRQMGDNVRFSLVAQASDVADCDTLIYYWPKNKPEAQFQLMNILSLMPVGSDVFVVGENRSGVRSAEPMLADYAPLNKVDSARRCGLYHGRLEKQPQFSLESWWAEYNIDGLTIKTLPGVFSRDGLDVGSQLLLSTLTPHTKGKVLDVGCGAGVLSAALASHSPKVRLTLCDVSAPAVEASRATLAANGLEGEVFASNVFSEVKGRFDMIISNPPFHDGMQTSLDAAQTLIRGAVRHLNSGGELRIVANAFLPYPKILDETFGFHEVIAQTGRFKVYRIVMTRQAKK</sequence>
<accession>Q8Z0V2</accession>
<accession>Q7C4U3</accession>
<keyword id="KW-0963">Cytoplasm</keyword>
<keyword id="KW-0489">Methyltransferase</keyword>
<keyword id="KW-0698">rRNA processing</keyword>
<keyword id="KW-0949">S-adenosyl-L-methionine</keyword>
<keyword id="KW-0808">Transferase</keyword>
<proteinExistence type="inferred from homology"/>
<reference key="1">
    <citation type="journal article" date="2001" name="Nature">
        <title>Complete genome sequence of a multiple drug resistant Salmonella enterica serovar Typhi CT18.</title>
        <authorList>
            <person name="Parkhill J."/>
            <person name="Dougan G."/>
            <person name="James K.D."/>
            <person name="Thomson N.R."/>
            <person name="Pickard D."/>
            <person name="Wain J."/>
            <person name="Churcher C.M."/>
            <person name="Mungall K.L."/>
            <person name="Bentley S.D."/>
            <person name="Holden M.T.G."/>
            <person name="Sebaihia M."/>
            <person name="Baker S."/>
            <person name="Basham D."/>
            <person name="Brooks K."/>
            <person name="Chillingworth T."/>
            <person name="Connerton P."/>
            <person name="Cronin A."/>
            <person name="Davis P."/>
            <person name="Davies R.M."/>
            <person name="Dowd L."/>
            <person name="White N."/>
            <person name="Farrar J."/>
            <person name="Feltwell T."/>
            <person name="Hamlin N."/>
            <person name="Haque A."/>
            <person name="Hien T.T."/>
            <person name="Holroyd S."/>
            <person name="Jagels K."/>
            <person name="Krogh A."/>
            <person name="Larsen T.S."/>
            <person name="Leather S."/>
            <person name="Moule S."/>
            <person name="O'Gaora P."/>
            <person name="Parry C."/>
            <person name="Quail M.A."/>
            <person name="Rutherford K.M."/>
            <person name="Simmonds M."/>
            <person name="Skelton J."/>
            <person name="Stevens K."/>
            <person name="Whitehead S."/>
            <person name="Barrell B.G."/>
        </authorList>
    </citation>
    <scope>NUCLEOTIDE SEQUENCE [LARGE SCALE GENOMIC DNA]</scope>
    <source>
        <strain>CT18</strain>
    </source>
</reference>
<reference key="2">
    <citation type="journal article" date="2003" name="J. Bacteriol.">
        <title>Comparative genomics of Salmonella enterica serovar Typhi strains Ty2 and CT18.</title>
        <authorList>
            <person name="Deng W."/>
            <person name="Liou S.-R."/>
            <person name="Plunkett G. III"/>
            <person name="Mayhew G.F."/>
            <person name="Rose D.J."/>
            <person name="Burland V."/>
            <person name="Kodoyianni V."/>
            <person name="Schwartz D.C."/>
            <person name="Blattner F.R."/>
        </authorList>
    </citation>
    <scope>NUCLEOTIDE SEQUENCE [LARGE SCALE GENOMIC DNA]</scope>
    <source>
        <strain>ATCC 700931 / Ty2</strain>
    </source>
</reference>
<evidence type="ECO:0000255" key="1">
    <source>
        <dbReference type="HAMAP-Rule" id="MF_01862"/>
    </source>
</evidence>
<comment type="function">
    <text evidence="1">Specifically methylates the guanine in position 1207 of 16S rRNA in the 30S particle.</text>
</comment>
<comment type="catalytic activity">
    <reaction evidence="1">
        <text>guanosine(1207) in 16S rRNA + S-adenosyl-L-methionine = N(2)-methylguanosine(1207) in 16S rRNA + S-adenosyl-L-homocysteine + H(+)</text>
        <dbReference type="Rhea" id="RHEA:42736"/>
        <dbReference type="Rhea" id="RHEA-COMP:10213"/>
        <dbReference type="Rhea" id="RHEA-COMP:10214"/>
        <dbReference type="ChEBI" id="CHEBI:15378"/>
        <dbReference type="ChEBI" id="CHEBI:57856"/>
        <dbReference type="ChEBI" id="CHEBI:59789"/>
        <dbReference type="ChEBI" id="CHEBI:74269"/>
        <dbReference type="ChEBI" id="CHEBI:74481"/>
        <dbReference type="EC" id="2.1.1.172"/>
    </reaction>
</comment>
<comment type="subunit">
    <text evidence="1">Monomer.</text>
</comment>
<comment type="subcellular location">
    <subcellularLocation>
        <location evidence="1">Cytoplasm</location>
    </subcellularLocation>
</comment>
<comment type="similarity">
    <text evidence="1">Belongs to the methyltransferase superfamily. RsmC family.</text>
</comment>
<organism>
    <name type="scientific">Salmonella typhi</name>
    <dbReference type="NCBI Taxonomy" id="90370"/>
    <lineage>
        <taxon>Bacteria</taxon>
        <taxon>Pseudomonadati</taxon>
        <taxon>Pseudomonadota</taxon>
        <taxon>Gammaproteobacteria</taxon>
        <taxon>Enterobacterales</taxon>
        <taxon>Enterobacteriaceae</taxon>
        <taxon>Salmonella</taxon>
    </lineage>
</organism>
<feature type="chain" id="PRO_0000369763" description="Ribosomal RNA small subunit methyltransferase C">
    <location>
        <begin position="1"/>
        <end position="342"/>
    </location>
</feature>